<feature type="chain" id="PRO_0000137966" description="Glycerol-3-phosphate dehydrogenase [NAD(P)+]">
    <location>
        <begin position="1"/>
        <end position="335"/>
    </location>
</feature>
<feature type="active site" description="Proton acceptor" evidence="1">
    <location>
        <position position="193"/>
    </location>
</feature>
<feature type="binding site" evidence="1">
    <location>
        <position position="12"/>
    </location>
    <ligand>
        <name>NADPH</name>
        <dbReference type="ChEBI" id="CHEBI:57783"/>
    </ligand>
</feature>
<feature type="binding site" evidence="1">
    <location>
        <position position="13"/>
    </location>
    <ligand>
        <name>NADPH</name>
        <dbReference type="ChEBI" id="CHEBI:57783"/>
    </ligand>
</feature>
<feature type="binding site" evidence="1">
    <location>
        <position position="107"/>
    </location>
    <ligand>
        <name>NADPH</name>
        <dbReference type="ChEBI" id="CHEBI:57783"/>
    </ligand>
</feature>
<feature type="binding site" evidence="1">
    <location>
        <position position="107"/>
    </location>
    <ligand>
        <name>sn-glycerol 3-phosphate</name>
        <dbReference type="ChEBI" id="CHEBI:57597"/>
    </ligand>
</feature>
<feature type="binding site" evidence="1">
    <location>
        <position position="138"/>
    </location>
    <ligand>
        <name>sn-glycerol 3-phosphate</name>
        <dbReference type="ChEBI" id="CHEBI:57597"/>
    </ligand>
</feature>
<feature type="binding site" evidence="1">
    <location>
        <position position="140"/>
    </location>
    <ligand>
        <name>sn-glycerol 3-phosphate</name>
        <dbReference type="ChEBI" id="CHEBI:57597"/>
    </ligand>
</feature>
<feature type="binding site" evidence="1">
    <location>
        <position position="142"/>
    </location>
    <ligand>
        <name>NADPH</name>
        <dbReference type="ChEBI" id="CHEBI:57783"/>
    </ligand>
</feature>
<feature type="binding site" evidence="1">
    <location>
        <position position="193"/>
    </location>
    <ligand>
        <name>sn-glycerol 3-phosphate</name>
        <dbReference type="ChEBI" id="CHEBI:57597"/>
    </ligand>
</feature>
<feature type="binding site" evidence="1">
    <location>
        <position position="246"/>
    </location>
    <ligand>
        <name>sn-glycerol 3-phosphate</name>
        <dbReference type="ChEBI" id="CHEBI:57597"/>
    </ligand>
</feature>
<feature type="binding site" evidence="1">
    <location>
        <position position="256"/>
    </location>
    <ligand>
        <name>sn-glycerol 3-phosphate</name>
        <dbReference type="ChEBI" id="CHEBI:57597"/>
    </ligand>
</feature>
<feature type="binding site" evidence="1">
    <location>
        <position position="257"/>
    </location>
    <ligand>
        <name>NADPH</name>
        <dbReference type="ChEBI" id="CHEBI:57783"/>
    </ligand>
</feature>
<feature type="binding site" evidence="1">
    <location>
        <position position="257"/>
    </location>
    <ligand>
        <name>sn-glycerol 3-phosphate</name>
        <dbReference type="ChEBI" id="CHEBI:57597"/>
    </ligand>
</feature>
<feature type="binding site" evidence="1">
    <location>
        <position position="258"/>
    </location>
    <ligand>
        <name>sn-glycerol 3-phosphate</name>
        <dbReference type="ChEBI" id="CHEBI:57597"/>
    </ligand>
</feature>
<feature type="binding site" evidence="1">
    <location>
        <position position="281"/>
    </location>
    <ligand>
        <name>NADPH</name>
        <dbReference type="ChEBI" id="CHEBI:57783"/>
    </ligand>
</feature>
<feature type="binding site" evidence="1">
    <location>
        <position position="283"/>
    </location>
    <ligand>
        <name>NADPH</name>
        <dbReference type="ChEBI" id="CHEBI:57783"/>
    </ligand>
</feature>
<name>GPDA_GEOSL</name>
<reference key="1">
    <citation type="journal article" date="2003" name="Science">
        <title>Genome of Geobacter sulfurreducens: metal reduction in subsurface environments.</title>
        <authorList>
            <person name="Methe B.A."/>
            <person name="Nelson K.E."/>
            <person name="Eisen J.A."/>
            <person name="Paulsen I.T."/>
            <person name="Nelson W.C."/>
            <person name="Heidelberg J.F."/>
            <person name="Wu D."/>
            <person name="Wu M."/>
            <person name="Ward N.L."/>
            <person name="Beanan M.J."/>
            <person name="Dodson R.J."/>
            <person name="Madupu R."/>
            <person name="Brinkac L.M."/>
            <person name="Daugherty S.C."/>
            <person name="DeBoy R.T."/>
            <person name="Durkin A.S."/>
            <person name="Gwinn M.L."/>
            <person name="Kolonay J.F."/>
            <person name="Sullivan S.A."/>
            <person name="Haft D.H."/>
            <person name="Selengut J."/>
            <person name="Davidsen T.M."/>
            <person name="Zafar N."/>
            <person name="White O."/>
            <person name="Tran B."/>
            <person name="Romero C."/>
            <person name="Forberger H.A."/>
            <person name="Weidman J.F."/>
            <person name="Khouri H.M."/>
            <person name="Feldblyum T.V."/>
            <person name="Utterback T.R."/>
            <person name="Van Aken S.E."/>
            <person name="Lovley D.R."/>
            <person name="Fraser C.M."/>
        </authorList>
    </citation>
    <scope>NUCLEOTIDE SEQUENCE [LARGE SCALE GENOMIC DNA]</scope>
    <source>
        <strain>ATCC 51573 / DSM 12127 / PCA</strain>
    </source>
</reference>
<accession>P61740</accession>
<evidence type="ECO:0000255" key="1">
    <source>
        <dbReference type="HAMAP-Rule" id="MF_00394"/>
    </source>
</evidence>
<keyword id="KW-0963">Cytoplasm</keyword>
<keyword id="KW-0444">Lipid biosynthesis</keyword>
<keyword id="KW-0443">Lipid metabolism</keyword>
<keyword id="KW-0520">NAD</keyword>
<keyword id="KW-0521">NADP</keyword>
<keyword id="KW-0547">Nucleotide-binding</keyword>
<keyword id="KW-0560">Oxidoreductase</keyword>
<keyword id="KW-0594">Phospholipid biosynthesis</keyword>
<keyword id="KW-1208">Phospholipid metabolism</keyword>
<keyword id="KW-1185">Reference proteome</keyword>
<organism>
    <name type="scientific">Geobacter sulfurreducens (strain ATCC 51573 / DSM 12127 / PCA)</name>
    <dbReference type="NCBI Taxonomy" id="243231"/>
    <lineage>
        <taxon>Bacteria</taxon>
        <taxon>Pseudomonadati</taxon>
        <taxon>Thermodesulfobacteriota</taxon>
        <taxon>Desulfuromonadia</taxon>
        <taxon>Geobacterales</taxon>
        <taxon>Geobacteraceae</taxon>
        <taxon>Geobacter</taxon>
    </lineage>
</organism>
<dbReference type="EC" id="1.1.1.94" evidence="1"/>
<dbReference type="EMBL" id="AE017180">
    <property type="protein sequence ID" value="AAR33341.1"/>
    <property type="molecule type" value="Genomic_DNA"/>
</dbReference>
<dbReference type="RefSeq" id="NP_951068.1">
    <property type="nucleotide sequence ID" value="NC_002939.5"/>
</dbReference>
<dbReference type="RefSeq" id="WP_010940684.1">
    <property type="nucleotide sequence ID" value="NC_002939.5"/>
</dbReference>
<dbReference type="SMR" id="P61740"/>
<dbReference type="FunCoup" id="P61740">
    <property type="interactions" value="475"/>
</dbReference>
<dbReference type="STRING" id="243231.GSU0006"/>
<dbReference type="EnsemblBacteria" id="AAR33341">
    <property type="protein sequence ID" value="AAR33341"/>
    <property type="gene ID" value="GSU0006"/>
</dbReference>
<dbReference type="KEGG" id="gsu:GSU0006"/>
<dbReference type="PATRIC" id="fig|243231.5.peg.7"/>
<dbReference type="eggNOG" id="COG0240">
    <property type="taxonomic scope" value="Bacteria"/>
</dbReference>
<dbReference type="HOGENOM" id="CLU_033449_0_2_7"/>
<dbReference type="InParanoid" id="P61740"/>
<dbReference type="OrthoDB" id="9812273at2"/>
<dbReference type="UniPathway" id="UPA00940"/>
<dbReference type="Proteomes" id="UP000000577">
    <property type="component" value="Chromosome"/>
</dbReference>
<dbReference type="GO" id="GO:0005829">
    <property type="term" value="C:cytosol"/>
    <property type="evidence" value="ECO:0000318"/>
    <property type="project" value="GO_Central"/>
</dbReference>
<dbReference type="GO" id="GO:0047952">
    <property type="term" value="F:glycerol-3-phosphate dehydrogenase [NAD(P)+] activity"/>
    <property type="evidence" value="ECO:0000318"/>
    <property type="project" value="GO_Central"/>
</dbReference>
<dbReference type="GO" id="GO:0051287">
    <property type="term" value="F:NAD binding"/>
    <property type="evidence" value="ECO:0007669"/>
    <property type="project" value="InterPro"/>
</dbReference>
<dbReference type="GO" id="GO:0005975">
    <property type="term" value="P:carbohydrate metabolic process"/>
    <property type="evidence" value="ECO:0007669"/>
    <property type="project" value="InterPro"/>
</dbReference>
<dbReference type="GO" id="GO:0046167">
    <property type="term" value="P:glycerol-3-phosphate biosynthetic process"/>
    <property type="evidence" value="ECO:0007669"/>
    <property type="project" value="UniProtKB-UniRule"/>
</dbReference>
<dbReference type="GO" id="GO:0046168">
    <property type="term" value="P:glycerol-3-phosphate catabolic process"/>
    <property type="evidence" value="ECO:0007669"/>
    <property type="project" value="InterPro"/>
</dbReference>
<dbReference type="GO" id="GO:0006072">
    <property type="term" value="P:glycerol-3-phosphate metabolic process"/>
    <property type="evidence" value="ECO:0000318"/>
    <property type="project" value="GO_Central"/>
</dbReference>
<dbReference type="GO" id="GO:0006650">
    <property type="term" value="P:glycerophospholipid metabolic process"/>
    <property type="evidence" value="ECO:0007669"/>
    <property type="project" value="UniProtKB-UniRule"/>
</dbReference>
<dbReference type="GO" id="GO:0008654">
    <property type="term" value="P:phospholipid biosynthetic process"/>
    <property type="evidence" value="ECO:0007669"/>
    <property type="project" value="UniProtKB-KW"/>
</dbReference>
<dbReference type="FunFam" id="1.10.1040.10:FF:000001">
    <property type="entry name" value="Glycerol-3-phosphate dehydrogenase [NAD(P)+]"/>
    <property type="match status" value="1"/>
</dbReference>
<dbReference type="FunFam" id="3.40.50.720:FF:000019">
    <property type="entry name" value="Glycerol-3-phosphate dehydrogenase [NAD(P)+]"/>
    <property type="match status" value="1"/>
</dbReference>
<dbReference type="Gene3D" id="1.10.1040.10">
    <property type="entry name" value="N-(1-d-carboxylethyl)-l-norvaline Dehydrogenase, domain 2"/>
    <property type="match status" value="1"/>
</dbReference>
<dbReference type="Gene3D" id="3.40.50.720">
    <property type="entry name" value="NAD(P)-binding Rossmann-like Domain"/>
    <property type="match status" value="1"/>
</dbReference>
<dbReference type="HAMAP" id="MF_00394">
    <property type="entry name" value="NAD_Glyc3P_dehydrog"/>
    <property type="match status" value="1"/>
</dbReference>
<dbReference type="InterPro" id="IPR008927">
    <property type="entry name" value="6-PGluconate_DH-like_C_sf"/>
</dbReference>
<dbReference type="InterPro" id="IPR013328">
    <property type="entry name" value="6PGD_dom2"/>
</dbReference>
<dbReference type="InterPro" id="IPR006168">
    <property type="entry name" value="G3P_DH_NAD-dep"/>
</dbReference>
<dbReference type="InterPro" id="IPR006109">
    <property type="entry name" value="G3P_DH_NAD-dep_C"/>
</dbReference>
<dbReference type="InterPro" id="IPR011128">
    <property type="entry name" value="G3P_DH_NAD-dep_N"/>
</dbReference>
<dbReference type="InterPro" id="IPR036291">
    <property type="entry name" value="NAD(P)-bd_dom_sf"/>
</dbReference>
<dbReference type="NCBIfam" id="NF000940">
    <property type="entry name" value="PRK00094.1-2"/>
    <property type="match status" value="1"/>
</dbReference>
<dbReference type="NCBIfam" id="NF000942">
    <property type="entry name" value="PRK00094.1-4"/>
    <property type="match status" value="1"/>
</dbReference>
<dbReference type="PANTHER" id="PTHR11728">
    <property type="entry name" value="GLYCEROL-3-PHOSPHATE DEHYDROGENASE"/>
    <property type="match status" value="1"/>
</dbReference>
<dbReference type="PANTHER" id="PTHR11728:SF1">
    <property type="entry name" value="GLYCEROL-3-PHOSPHATE DEHYDROGENASE [NAD(+)] 2, CHLOROPLASTIC"/>
    <property type="match status" value="1"/>
</dbReference>
<dbReference type="Pfam" id="PF07479">
    <property type="entry name" value="NAD_Gly3P_dh_C"/>
    <property type="match status" value="1"/>
</dbReference>
<dbReference type="Pfam" id="PF01210">
    <property type="entry name" value="NAD_Gly3P_dh_N"/>
    <property type="match status" value="1"/>
</dbReference>
<dbReference type="PIRSF" id="PIRSF000114">
    <property type="entry name" value="Glycerol-3-P_dh"/>
    <property type="match status" value="1"/>
</dbReference>
<dbReference type="PRINTS" id="PR00077">
    <property type="entry name" value="GPDHDRGNASE"/>
</dbReference>
<dbReference type="SUPFAM" id="SSF48179">
    <property type="entry name" value="6-phosphogluconate dehydrogenase C-terminal domain-like"/>
    <property type="match status" value="1"/>
</dbReference>
<dbReference type="SUPFAM" id="SSF51735">
    <property type="entry name" value="NAD(P)-binding Rossmann-fold domains"/>
    <property type="match status" value="1"/>
</dbReference>
<dbReference type="PROSITE" id="PS00957">
    <property type="entry name" value="NAD_G3PDH"/>
    <property type="match status" value="1"/>
</dbReference>
<gene>
    <name evidence="1" type="primary">gpsA</name>
    <name type="ordered locus">GSU0006</name>
</gene>
<comment type="function">
    <text evidence="1">Catalyzes the reduction of the glycolytic intermediate dihydroxyacetone phosphate (DHAP) to sn-glycerol 3-phosphate (G3P), the key precursor for phospholipid synthesis.</text>
</comment>
<comment type="catalytic activity">
    <reaction evidence="1">
        <text>sn-glycerol 3-phosphate + NAD(+) = dihydroxyacetone phosphate + NADH + H(+)</text>
        <dbReference type="Rhea" id="RHEA:11092"/>
        <dbReference type="ChEBI" id="CHEBI:15378"/>
        <dbReference type="ChEBI" id="CHEBI:57540"/>
        <dbReference type="ChEBI" id="CHEBI:57597"/>
        <dbReference type="ChEBI" id="CHEBI:57642"/>
        <dbReference type="ChEBI" id="CHEBI:57945"/>
        <dbReference type="EC" id="1.1.1.94"/>
    </reaction>
    <physiologicalReaction direction="right-to-left" evidence="1">
        <dbReference type="Rhea" id="RHEA:11094"/>
    </physiologicalReaction>
</comment>
<comment type="catalytic activity">
    <reaction evidence="1">
        <text>sn-glycerol 3-phosphate + NADP(+) = dihydroxyacetone phosphate + NADPH + H(+)</text>
        <dbReference type="Rhea" id="RHEA:11096"/>
        <dbReference type="ChEBI" id="CHEBI:15378"/>
        <dbReference type="ChEBI" id="CHEBI:57597"/>
        <dbReference type="ChEBI" id="CHEBI:57642"/>
        <dbReference type="ChEBI" id="CHEBI:57783"/>
        <dbReference type="ChEBI" id="CHEBI:58349"/>
        <dbReference type="EC" id="1.1.1.94"/>
    </reaction>
    <physiologicalReaction direction="right-to-left" evidence="1">
        <dbReference type="Rhea" id="RHEA:11098"/>
    </physiologicalReaction>
</comment>
<comment type="pathway">
    <text evidence="1">Membrane lipid metabolism; glycerophospholipid metabolism.</text>
</comment>
<comment type="subcellular location">
    <subcellularLocation>
        <location evidence="1">Cytoplasm</location>
    </subcellularLocation>
</comment>
<comment type="similarity">
    <text evidence="1">Belongs to the NAD-dependent glycerol-3-phosphate dehydrogenase family.</text>
</comment>
<sequence>MSERIGVIGAGSWGTTLANLLARKGLDVTLWAYEAELVEEMRATRVNSLFLPGIELAPALSFTNSLEEAATGKDFLVLVSPSQVMRGVLAQLAPLLRPGVVLVNASKGIELDTLMTMDQVCAAVLPPEVARCFSVLSGPSFAREVSLEMPTAVVAASGDPAVAAAVQRLFTTPSFRVYTNTDVVGVEIGGALKNVIAVAAGISDGLGLGHNTRAALITRGLAEMTRLGLSMGAQPETFAGLAGMGDLVLTCTGDLSRNRTVGMKLGQGMKLADVLGEMRMVAEGVKTAESAYRLARRTGVEMPITEKVYQVLHEDKPARQAVMELMTRDLKAERW</sequence>
<protein>
    <recommendedName>
        <fullName evidence="1">Glycerol-3-phosphate dehydrogenase [NAD(P)+]</fullName>
        <ecNumber evidence="1">1.1.1.94</ecNumber>
    </recommendedName>
    <alternativeName>
        <fullName evidence="1">NAD(P)(+)-dependent glycerol-3-phosphate dehydrogenase</fullName>
    </alternativeName>
    <alternativeName>
        <fullName evidence="1">NAD(P)H-dependent dihydroxyacetone-phosphate reductase</fullName>
    </alternativeName>
</protein>
<proteinExistence type="inferred from homology"/>